<accession>P66915</accession>
<accession>Q99SG4</accession>
<organism>
    <name type="scientific">Staphylococcus aureus (strain Mu50 / ATCC 700699)</name>
    <dbReference type="NCBI Taxonomy" id="158878"/>
    <lineage>
        <taxon>Bacteria</taxon>
        <taxon>Bacillati</taxon>
        <taxon>Bacillota</taxon>
        <taxon>Bacilli</taxon>
        <taxon>Bacillales</taxon>
        <taxon>Staphylococcaceae</taxon>
        <taxon>Staphylococcus</taxon>
    </lineage>
</organism>
<dbReference type="EC" id="2.7.1.49" evidence="2"/>
<dbReference type="EC" id="2.7.4.7" evidence="2"/>
<dbReference type="EMBL" id="BA000017">
    <property type="protein sequence ID" value="BAB58255.1"/>
    <property type="molecule type" value="Genomic_DNA"/>
</dbReference>
<dbReference type="RefSeq" id="WP_000594954.1">
    <property type="nucleotide sequence ID" value="NC_002758.2"/>
</dbReference>
<dbReference type="SMR" id="P66915"/>
<dbReference type="KEGG" id="sav:SAV2093"/>
<dbReference type="HOGENOM" id="CLU_020520_0_0_9"/>
<dbReference type="PhylomeDB" id="P66915"/>
<dbReference type="BRENDA" id="2.7.1.49">
    <property type="organism ID" value="3352"/>
</dbReference>
<dbReference type="BRENDA" id="2.7.4.7">
    <property type="organism ID" value="3352"/>
</dbReference>
<dbReference type="UniPathway" id="UPA00060">
    <property type="reaction ID" value="UER00137"/>
</dbReference>
<dbReference type="UniPathway" id="UPA00060">
    <property type="reaction ID" value="UER00138"/>
</dbReference>
<dbReference type="Proteomes" id="UP000002481">
    <property type="component" value="Chromosome"/>
</dbReference>
<dbReference type="GO" id="GO:0005829">
    <property type="term" value="C:cytosol"/>
    <property type="evidence" value="ECO:0007669"/>
    <property type="project" value="TreeGrafter"/>
</dbReference>
<dbReference type="GO" id="GO:0005524">
    <property type="term" value="F:ATP binding"/>
    <property type="evidence" value="ECO:0007669"/>
    <property type="project" value="UniProtKB-KW"/>
</dbReference>
<dbReference type="GO" id="GO:0008902">
    <property type="term" value="F:hydroxymethylpyrimidine kinase activity"/>
    <property type="evidence" value="ECO:0007669"/>
    <property type="project" value="UniProtKB-EC"/>
</dbReference>
<dbReference type="GO" id="GO:0008972">
    <property type="term" value="F:phosphomethylpyrimidine kinase activity"/>
    <property type="evidence" value="ECO:0007669"/>
    <property type="project" value="UniProtKB-EC"/>
</dbReference>
<dbReference type="GO" id="GO:0009228">
    <property type="term" value="P:thiamine biosynthetic process"/>
    <property type="evidence" value="ECO:0007669"/>
    <property type="project" value="UniProtKB-KW"/>
</dbReference>
<dbReference type="GO" id="GO:0009229">
    <property type="term" value="P:thiamine diphosphate biosynthetic process"/>
    <property type="evidence" value="ECO:0007669"/>
    <property type="project" value="UniProtKB-UniPathway"/>
</dbReference>
<dbReference type="CDD" id="cd01169">
    <property type="entry name" value="HMPP_kinase"/>
    <property type="match status" value="1"/>
</dbReference>
<dbReference type="FunFam" id="3.40.1190.20:FF:000003">
    <property type="entry name" value="Phosphomethylpyrimidine kinase ThiD"/>
    <property type="match status" value="1"/>
</dbReference>
<dbReference type="Gene3D" id="3.40.1190.20">
    <property type="match status" value="1"/>
</dbReference>
<dbReference type="InterPro" id="IPR004399">
    <property type="entry name" value="HMP/HMP-P_kinase_dom"/>
</dbReference>
<dbReference type="InterPro" id="IPR013749">
    <property type="entry name" value="PM/HMP-P_kinase-1"/>
</dbReference>
<dbReference type="InterPro" id="IPR029056">
    <property type="entry name" value="Ribokinase-like"/>
</dbReference>
<dbReference type="NCBIfam" id="TIGR00097">
    <property type="entry name" value="HMP-P_kinase"/>
    <property type="match status" value="1"/>
</dbReference>
<dbReference type="PANTHER" id="PTHR20858:SF17">
    <property type="entry name" value="HYDROXYMETHYLPYRIMIDINE_PHOSPHOMETHYLPYRIMIDINE KINASE THI20-RELATED"/>
    <property type="match status" value="1"/>
</dbReference>
<dbReference type="PANTHER" id="PTHR20858">
    <property type="entry name" value="PHOSPHOMETHYLPYRIMIDINE KINASE"/>
    <property type="match status" value="1"/>
</dbReference>
<dbReference type="Pfam" id="PF08543">
    <property type="entry name" value="Phos_pyr_kin"/>
    <property type="match status" value="1"/>
</dbReference>
<dbReference type="SUPFAM" id="SSF53613">
    <property type="entry name" value="Ribokinase-like"/>
    <property type="match status" value="1"/>
</dbReference>
<keyword id="KW-0067">ATP-binding</keyword>
<keyword id="KW-0418">Kinase</keyword>
<keyword id="KW-0547">Nucleotide-binding</keyword>
<keyword id="KW-0784">Thiamine biosynthesis</keyword>
<keyword id="KW-0808">Transferase</keyword>
<proteinExistence type="inferred from homology"/>
<reference key="1">
    <citation type="journal article" date="2001" name="Lancet">
        <title>Whole genome sequencing of meticillin-resistant Staphylococcus aureus.</title>
        <authorList>
            <person name="Kuroda M."/>
            <person name="Ohta T."/>
            <person name="Uchiyama I."/>
            <person name="Baba T."/>
            <person name="Yuzawa H."/>
            <person name="Kobayashi I."/>
            <person name="Cui L."/>
            <person name="Oguchi A."/>
            <person name="Aoki K."/>
            <person name="Nagai Y."/>
            <person name="Lian J.-Q."/>
            <person name="Ito T."/>
            <person name="Kanamori M."/>
            <person name="Matsumaru H."/>
            <person name="Maruyama A."/>
            <person name="Murakami H."/>
            <person name="Hosoyama A."/>
            <person name="Mizutani-Ui Y."/>
            <person name="Takahashi N.K."/>
            <person name="Sawano T."/>
            <person name="Inoue R."/>
            <person name="Kaito C."/>
            <person name="Sekimizu K."/>
            <person name="Hirakawa H."/>
            <person name="Kuhara S."/>
            <person name="Goto S."/>
            <person name="Yabuzaki J."/>
            <person name="Kanehisa M."/>
            <person name="Yamashita A."/>
            <person name="Oshima K."/>
            <person name="Furuya K."/>
            <person name="Yoshino C."/>
            <person name="Shiba T."/>
            <person name="Hattori M."/>
            <person name="Ogasawara N."/>
            <person name="Hayashi H."/>
            <person name="Hiramatsu K."/>
        </authorList>
    </citation>
    <scope>NUCLEOTIDE SEQUENCE [LARGE SCALE GENOMIC DNA]</scope>
    <source>
        <strain>Mu50 / ATCC 700699</strain>
    </source>
</reference>
<gene>
    <name type="primary">thiD</name>
    <name type="ordered locus">SAV2093</name>
</gene>
<evidence type="ECO:0000250" key="1"/>
<evidence type="ECO:0000250" key="2">
    <source>
        <dbReference type="UniProtKB" id="P76422"/>
    </source>
</evidence>
<evidence type="ECO:0000305" key="3"/>
<comment type="function">
    <text evidence="2">Catalyzes the phosphorylation of hydroxymethylpyrimidine phosphate (HMP-P) to HMP-PP, and of HMP to HMP-P.</text>
</comment>
<comment type="catalytic activity">
    <reaction evidence="2">
        <text>4-amino-5-hydroxymethyl-2-methylpyrimidine + ATP = 4-amino-2-methyl-5-(phosphooxymethyl)pyrimidine + ADP + H(+)</text>
        <dbReference type="Rhea" id="RHEA:23096"/>
        <dbReference type="ChEBI" id="CHEBI:15378"/>
        <dbReference type="ChEBI" id="CHEBI:16892"/>
        <dbReference type="ChEBI" id="CHEBI:30616"/>
        <dbReference type="ChEBI" id="CHEBI:58354"/>
        <dbReference type="ChEBI" id="CHEBI:456216"/>
        <dbReference type="EC" id="2.7.1.49"/>
    </reaction>
</comment>
<comment type="catalytic activity">
    <reaction evidence="2">
        <text>4-amino-2-methyl-5-(phosphooxymethyl)pyrimidine + ATP = 4-amino-2-methyl-5-(diphosphooxymethyl)pyrimidine + ADP</text>
        <dbReference type="Rhea" id="RHEA:19893"/>
        <dbReference type="ChEBI" id="CHEBI:30616"/>
        <dbReference type="ChEBI" id="CHEBI:57841"/>
        <dbReference type="ChEBI" id="CHEBI:58354"/>
        <dbReference type="ChEBI" id="CHEBI:456216"/>
        <dbReference type="EC" id="2.7.4.7"/>
    </reaction>
</comment>
<comment type="pathway">
    <text>Cofactor biosynthesis; thiamine diphosphate biosynthesis; 4-amino-2-methyl-5-diphosphomethylpyrimidine from 5-amino-1-(5-phospho-D-ribosyl)imidazole: step 2/3.</text>
</comment>
<comment type="pathway">
    <text>Cofactor biosynthesis; thiamine diphosphate biosynthesis; 4-amino-2-methyl-5-diphosphomethylpyrimidine from 5-amino-1-(5-phospho-D-ribosyl)imidazole: step 3/3.</text>
</comment>
<comment type="similarity">
    <text evidence="3">Belongs to the ThiD family.</text>
</comment>
<name>THID_STAAM</name>
<protein>
    <recommendedName>
        <fullName>Hydroxymethylpyrimidine/phosphomethylpyrimidine kinase</fullName>
        <ecNumber evidence="2">2.7.1.49</ecNumber>
        <ecNumber evidence="2">2.7.4.7</ecNumber>
    </recommendedName>
    <alternativeName>
        <fullName>Hydroxymethylpyrimidine kinase</fullName>
        <shortName>HMP kinase</shortName>
    </alternativeName>
    <alternativeName>
        <fullName>Hydroxymethylpyrimidine phosphate kinase</fullName>
        <shortName>HMP-P kinase</shortName>
        <shortName>HMP-phosphate kinase</shortName>
        <shortName>HMPP kinase</shortName>
    </alternativeName>
</protein>
<sequence>MIKPKIALTIAGTDPTGGAGVMADLKSFHSCGVYGMGVVTSIVAQNTLGVQHIHNLNHQWVDEQLDSVFNDTLPHAIKTGMIATADTMETIRHYLMQHESIPYVIDPVMLAKSGDSLMDNDTKQNLQHTLLPLADVVTPNLPEAEEITGLTIDSEEKIMQAGRIFINEIGSKGIIIKGGHSNDTDIAKDYLFTNEGVQTFENERFKTKHTHGTGCTFSAVITAELAKGRPLFEAVHKAKKFISMSIQYTPEIGRGRGPVNHFAYLKKEGLDDELSK</sequence>
<feature type="chain" id="PRO_0000192028" description="Hydroxymethylpyrimidine/phosphomethylpyrimidine kinase">
    <location>
        <begin position="1"/>
        <end position="276"/>
    </location>
</feature>
<feature type="binding site" evidence="1">
    <location>
        <position position="45"/>
    </location>
    <ligand>
        <name>4-amino-5-hydroxymethyl-2-methylpyrimidine</name>
        <dbReference type="ChEBI" id="CHEBI:16892"/>
    </ligand>
</feature>